<reference key="1">
    <citation type="journal article" date="1990" name="J. Bacteriol.">
        <title>Sequence of the Streptococcus pneumoniae bacteriophage HB-3 amidase reveals high homology with the major host autolysin.</title>
        <authorList>
            <person name="Romero A."/>
            <person name="Lopez R."/>
            <person name="Garcia P."/>
        </authorList>
    </citation>
    <scope>NUCLEOTIDE SEQUENCE [GENOMIC DNA]</scope>
</reference>
<reference key="2">
    <citation type="journal article" date="1990" name="J. Virol.">
        <title>Characterization of the pneumococcal bacteriophage HB-3 amidase: cloning and expression in Escherichia coli.</title>
        <authorList>
            <person name="Romero A."/>
            <person name="Lopez R."/>
            <person name="Garcia P."/>
        </authorList>
    </citation>
    <scope>PROTEIN SEQUENCE OF 1-21</scope>
</reference>
<accession>P32762</accession>
<protein>
    <recommendedName>
        <fullName>Lytic amidase</fullName>
        <ecNumber>3.5.1.28</ecNumber>
    </recommendedName>
    <alternativeName>
        <fullName>N-acetylmuramoyl-L-alanine amidase</fullName>
    </alternativeName>
</protein>
<evidence type="ECO:0000255" key="1"/>
<evidence type="ECO:0000305" key="2"/>
<organism>
    <name type="scientific">Streptococcus pneumoniae phage HB-3</name>
    <dbReference type="NCBI Taxonomy" id="10728"/>
    <lineage>
        <taxon>Viruses</taxon>
        <taxon>Duplodnaviria</taxon>
        <taxon>Heunggongvirae</taxon>
        <taxon>Uroviricota</taxon>
        <taxon>Caudoviricetes</taxon>
    </lineage>
</organism>
<proteinExistence type="evidence at protein level"/>
<name>ALYS_BPHB3</name>
<organismHost>
    <name type="scientific">Streptococcus pneumoniae</name>
    <dbReference type="NCBI Taxonomy" id="1313"/>
</organismHost>
<comment type="catalytic activity">
    <reaction>
        <text>Hydrolyzes the link between N-acetylmuramoyl residues and L-amino acid residues in certain cell-wall glycopeptides.</text>
        <dbReference type="EC" id="3.5.1.28"/>
    </reaction>
</comment>
<comment type="subcellular location">
    <subcellularLocation>
        <location evidence="2">Secreted</location>
    </subcellularLocation>
</comment>
<comment type="similarity">
    <text evidence="2">Belongs to the N-acetylmuramoyl-L-alanine amidase 2 family.</text>
</comment>
<gene>
    <name type="primary">HBL</name>
</gene>
<dbReference type="EC" id="3.5.1.28"/>
<dbReference type="EMBL" id="M34652">
    <property type="protein sequence ID" value="AAA50574.1"/>
    <property type="molecule type" value="Genomic_DNA"/>
</dbReference>
<dbReference type="PIR" id="S16016">
    <property type="entry name" value="S16016"/>
</dbReference>
<dbReference type="SMR" id="P32762"/>
<dbReference type="GO" id="GO:0005576">
    <property type="term" value="C:extracellular region"/>
    <property type="evidence" value="ECO:0007669"/>
    <property type="project" value="UniProtKB-SubCell"/>
</dbReference>
<dbReference type="GO" id="GO:0008745">
    <property type="term" value="F:N-acetylmuramoyl-L-alanine amidase activity"/>
    <property type="evidence" value="ECO:0007669"/>
    <property type="project" value="UniProtKB-EC"/>
</dbReference>
<dbReference type="GO" id="GO:0071555">
    <property type="term" value="P:cell wall organization"/>
    <property type="evidence" value="ECO:0007669"/>
    <property type="project" value="UniProtKB-KW"/>
</dbReference>
<dbReference type="GO" id="GO:0042742">
    <property type="term" value="P:defense response to bacterium"/>
    <property type="evidence" value="ECO:0007669"/>
    <property type="project" value="UniProtKB-KW"/>
</dbReference>
<dbReference type="GO" id="GO:0009253">
    <property type="term" value="P:peptidoglycan catabolic process"/>
    <property type="evidence" value="ECO:0007669"/>
    <property type="project" value="InterPro"/>
</dbReference>
<dbReference type="GO" id="GO:0001897">
    <property type="term" value="P:symbiont-mediated cytolysis of host cell"/>
    <property type="evidence" value="ECO:0007669"/>
    <property type="project" value="UniProtKB-ARBA"/>
</dbReference>
<dbReference type="CDD" id="cd06583">
    <property type="entry name" value="PGRP"/>
    <property type="match status" value="1"/>
</dbReference>
<dbReference type="Gene3D" id="2.10.270.10">
    <property type="entry name" value="Cholin Binding"/>
    <property type="match status" value="1"/>
</dbReference>
<dbReference type="Gene3D" id="3.40.80.10">
    <property type="entry name" value="Peptidoglycan recognition protein-like"/>
    <property type="match status" value="1"/>
</dbReference>
<dbReference type="InterPro" id="IPR036505">
    <property type="entry name" value="Amidase/PGRP_sf"/>
</dbReference>
<dbReference type="InterPro" id="IPR002502">
    <property type="entry name" value="Amidase_domain"/>
</dbReference>
<dbReference type="InterPro" id="IPR018337">
    <property type="entry name" value="Cell_wall/Cho-bd_repeat"/>
</dbReference>
<dbReference type="Pfam" id="PF01473">
    <property type="entry name" value="Choline_bind_1"/>
    <property type="match status" value="3"/>
</dbReference>
<dbReference type="Pfam" id="PF19127">
    <property type="entry name" value="Choline_bind_3"/>
    <property type="match status" value="1"/>
</dbReference>
<dbReference type="SMART" id="SM00644">
    <property type="entry name" value="Ami_2"/>
    <property type="match status" value="1"/>
</dbReference>
<dbReference type="SUPFAM" id="SSF69360">
    <property type="entry name" value="Cell wall binding repeat"/>
    <property type="match status" value="1"/>
</dbReference>
<dbReference type="SUPFAM" id="SSF55846">
    <property type="entry name" value="N-acetylmuramoyl-L-alanine amidase-like"/>
    <property type="match status" value="1"/>
</dbReference>
<dbReference type="PROSITE" id="PS51170">
    <property type="entry name" value="CW"/>
    <property type="match status" value="6"/>
</dbReference>
<sequence>MDIDRNRLRTGLPQVGVQPYRQVHAHSTGNRNSTVQNEADYHWRKDPELGFFSHVVGNFRIMQVGPVNNGSWDVGGGWNAETYAAVELIESHSTKEEFMADYRLYIELLRNLADEAGLPKTLDTDDLAGIKTHEYCTNNQPNNHSDHVDPYPYLASWGISREQFKQDIENGLSAATGWQKNGTGYWYVHSDGSYSKDKFEKINGTWYYFDGSGYMLSDRWKKHTDGNWYYFDQSGEMATGWKKIADKWYYFDVEGAMKTGWVKYKDTWYYLDAKEGAMVSNAFIQSADGTGWYYLKPDGTLADKPEFTVEPDGLITVK</sequence>
<keyword id="KW-0929">Antimicrobial</keyword>
<keyword id="KW-0081">Bacteriolytic enzyme</keyword>
<keyword id="KW-0961">Cell wall biogenesis/degradation</keyword>
<keyword id="KW-0903">Direct protein sequencing</keyword>
<keyword id="KW-0378">Hydrolase</keyword>
<keyword id="KW-0677">Repeat</keyword>
<keyword id="KW-0964">Secreted</keyword>
<feature type="chain" id="PRO_0000164406" description="Lytic amidase">
    <location>
        <begin position="1"/>
        <end position="318"/>
    </location>
</feature>
<feature type="domain" description="N-acetylmuramoyl-L-alanine amidase" evidence="1">
    <location>
        <begin position="19"/>
        <end position="151"/>
    </location>
</feature>
<feature type="repeat" description="Cell wall-binding 1">
    <location>
        <begin position="175"/>
        <end position="194"/>
    </location>
</feature>
<feature type="repeat" description="Cell wall-binding 2">
    <location>
        <begin position="196"/>
        <end position="215"/>
    </location>
</feature>
<feature type="repeat" description="Cell wall-binding 3">
    <location>
        <begin position="217"/>
        <end position="237"/>
    </location>
</feature>
<feature type="repeat" description="Cell wall-binding 4">
    <location>
        <begin position="238"/>
        <end position="257"/>
    </location>
</feature>
<feature type="repeat" description="Cell wall-binding 5">
    <location>
        <begin position="258"/>
        <end position="277"/>
    </location>
</feature>
<feature type="repeat" description="Cell wall-binding 6">
    <location>
        <begin position="280"/>
        <end position="301"/>
    </location>
</feature>